<feature type="chain" id="PRO_1000074465" description="UDP-N-acetylglucosamine--N-acetylmuramyl-(pentapeptide) pyrophosphoryl-undecaprenol N-acetylglucosamine transferase">
    <location>
        <begin position="1"/>
        <end position="359"/>
    </location>
</feature>
<feature type="binding site" evidence="1">
    <location>
        <begin position="15"/>
        <end position="17"/>
    </location>
    <ligand>
        <name>UDP-N-acetyl-alpha-D-glucosamine</name>
        <dbReference type="ChEBI" id="CHEBI:57705"/>
    </ligand>
</feature>
<feature type="binding site" evidence="1">
    <location>
        <position position="127"/>
    </location>
    <ligand>
        <name>UDP-N-acetyl-alpha-D-glucosamine</name>
        <dbReference type="ChEBI" id="CHEBI:57705"/>
    </ligand>
</feature>
<feature type="binding site" evidence="1">
    <location>
        <position position="166"/>
    </location>
    <ligand>
        <name>UDP-N-acetyl-alpha-D-glucosamine</name>
        <dbReference type="ChEBI" id="CHEBI:57705"/>
    </ligand>
</feature>
<feature type="binding site" evidence="1">
    <location>
        <position position="191"/>
    </location>
    <ligand>
        <name>UDP-N-acetyl-alpha-D-glucosamine</name>
        <dbReference type="ChEBI" id="CHEBI:57705"/>
    </ligand>
</feature>
<feature type="binding site" evidence="1">
    <location>
        <position position="245"/>
    </location>
    <ligand>
        <name>UDP-N-acetyl-alpha-D-glucosamine</name>
        <dbReference type="ChEBI" id="CHEBI:57705"/>
    </ligand>
</feature>
<feature type="binding site" evidence="1">
    <location>
        <begin position="264"/>
        <end position="269"/>
    </location>
    <ligand>
        <name>UDP-N-acetyl-alpha-D-glucosamine</name>
        <dbReference type="ChEBI" id="CHEBI:57705"/>
    </ligand>
</feature>
<feature type="binding site" evidence="1">
    <location>
        <position position="290"/>
    </location>
    <ligand>
        <name>UDP-N-acetyl-alpha-D-glucosamine</name>
        <dbReference type="ChEBI" id="CHEBI:57705"/>
    </ligand>
</feature>
<proteinExistence type="inferred from homology"/>
<sequence>MAADGKNVLIMAGGTGGHVFPALACAREFQARGYSVHWLGTPRGIENELVPQAGLPLHLIQVSGLRGKGKLSLLKAPFTLIKAVLQARRIIRQLKPVCVLGFGGYVTGPGGVAARLCGVPLVIHEQNARAGTANRLLVPLSARVCEAFPNTFEASDKRRTTGNPVRPELFMDAQRAPLAERRARLLVLGGSLGAEPLNKLLPKALSEVPAGLRPEVFHQAGKQHAPITAERYHEAGVAAQVEPFIKDMAQAYGWADMVVCRAGALTVSELAAAGLPSMLVPLPHAIDDHQTHNAQYLAREGAAFLMPQATTGAAQLAERLNEVLMQPEKLNVMAGTARRLAKPAATSTVVDICLEVAHG</sequence>
<keyword id="KW-0131">Cell cycle</keyword>
<keyword id="KW-0132">Cell division</keyword>
<keyword id="KW-0997">Cell inner membrane</keyword>
<keyword id="KW-1003">Cell membrane</keyword>
<keyword id="KW-0133">Cell shape</keyword>
<keyword id="KW-0961">Cell wall biogenesis/degradation</keyword>
<keyword id="KW-0328">Glycosyltransferase</keyword>
<keyword id="KW-0472">Membrane</keyword>
<keyword id="KW-0573">Peptidoglycan synthesis</keyword>
<keyword id="KW-0808">Transferase</keyword>
<accession>B0KFS6</accession>
<reference key="1">
    <citation type="submission" date="2008-01" db="EMBL/GenBank/DDBJ databases">
        <title>Complete sequence of Pseudomonas putida GB-1.</title>
        <authorList>
            <consortium name="US DOE Joint Genome Institute"/>
            <person name="Copeland A."/>
            <person name="Lucas S."/>
            <person name="Lapidus A."/>
            <person name="Barry K."/>
            <person name="Glavina del Rio T."/>
            <person name="Dalin E."/>
            <person name="Tice H."/>
            <person name="Pitluck S."/>
            <person name="Bruce D."/>
            <person name="Goodwin L."/>
            <person name="Chertkov O."/>
            <person name="Brettin T."/>
            <person name="Detter J.C."/>
            <person name="Han C."/>
            <person name="Kuske C.R."/>
            <person name="Schmutz J."/>
            <person name="Larimer F."/>
            <person name="Land M."/>
            <person name="Hauser L."/>
            <person name="Kyrpides N."/>
            <person name="Kim E."/>
            <person name="McCarthy J.K."/>
            <person name="Richardson P."/>
        </authorList>
    </citation>
    <scope>NUCLEOTIDE SEQUENCE [LARGE SCALE GENOMIC DNA]</scope>
    <source>
        <strain>GB-1</strain>
    </source>
</reference>
<gene>
    <name evidence="1" type="primary">murG</name>
    <name type="ordered locus">PputGB1_4512</name>
</gene>
<dbReference type="EC" id="2.4.1.227" evidence="1"/>
<dbReference type="EMBL" id="CP000926">
    <property type="protein sequence ID" value="ABZ00399.1"/>
    <property type="molecule type" value="Genomic_DNA"/>
</dbReference>
<dbReference type="RefSeq" id="WP_012274059.1">
    <property type="nucleotide sequence ID" value="NC_010322.1"/>
</dbReference>
<dbReference type="SMR" id="B0KFS6"/>
<dbReference type="CAZy" id="GT28">
    <property type="family name" value="Glycosyltransferase Family 28"/>
</dbReference>
<dbReference type="KEGG" id="ppg:PputGB1_4512"/>
<dbReference type="eggNOG" id="COG0707">
    <property type="taxonomic scope" value="Bacteria"/>
</dbReference>
<dbReference type="HOGENOM" id="CLU_037404_2_0_6"/>
<dbReference type="UniPathway" id="UPA00219"/>
<dbReference type="Proteomes" id="UP000002157">
    <property type="component" value="Chromosome"/>
</dbReference>
<dbReference type="GO" id="GO:0005886">
    <property type="term" value="C:plasma membrane"/>
    <property type="evidence" value="ECO:0007669"/>
    <property type="project" value="UniProtKB-SubCell"/>
</dbReference>
<dbReference type="GO" id="GO:0051991">
    <property type="term" value="F:UDP-N-acetyl-D-glucosamine:N-acetylmuramoyl-L-alanyl-D-glutamyl-meso-2,6-diaminopimelyl-D-alanyl-D-alanine-diphosphoundecaprenol 4-beta-N-acetylglucosaminlytransferase activity"/>
    <property type="evidence" value="ECO:0007669"/>
    <property type="project" value="RHEA"/>
</dbReference>
<dbReference type="GO" id="GO:0050511">
    <property type="term" value="F:undecaprenyldiphospho-muramoylpentapeptide beta-N-acetylglucosaminyltransferase activity"/>
    <property type="evidence" value="ECO:0007669"/>
    <property type="project" value="UniProtKB-UniRule"/>
</dbReference>
<dbReference type="GO" id="GO:0005975">
    <property type="term" value="P:carbohydrate metabolic process"/>
    <property type="evidence" value="ECO:0007669"/>
    <property type="project" value="InterPro"/>
</dbReference>
<dbReference type="GO" id="GO:0051301">
    <property type="term" value="P:cell division"/>
    <property type="evidence" value="ECO:0007669"/>
    <property type="project" value="UniProtKB-KW"/>
</dbReference>
<dbReference type="GO" id="GO:0071555">
    <property type="term" value="P:cell wall organization"/>
    <property type="evidence" value="ECO:0007669"/>
    <property type="project" value="UniProtKB-KW"/>
</dbReference>
<dbReference type="GO" id="GO:0030259">
    <property type="term" value="P:lipid glycosylation"/>
    <property type="evidence" value="ECO:0007669"/>
    <property type="project" value="UniProtKB-UniRule"/>
</dbReference>
<dbReference type="GO" id="GO:0009252">
    <property type="term" value="P:peptidoglycan biosynthetic process"/>
    <property type="evidence" value="ECO:0007669"/>
    <property type="project" value="UniProtKB-UniRule"/>
</dbReference>
<dbReference type="GO" id="GO:0008360">
    <property type="term" value="P:regulation of cell shape"/>
    <property type="evidence" value="ECO:0007669"/>
    <property type="project" value="UniProtKB-KW"/>
</dbReference>
<dbReference type="CDD" id="cd03785">
    <property type="entry name" value="GT28_MurG"/>
    <property type="match status" value="1"/>
</dbReference>
<dbReference type="Gene3D" id="3.40.50.2000">
    <property type="entry name" value="Glycogen Phosphorylase B"/>
    <property type="match status" value="2"/>
</dbReference>
<dbReference type="HAMAP" id="MF_00033">
    <property type="entry name" value="MurG"/>
    <property type="match status" value="1"/>
</dbReference>
<dbReference type="InterPro" id="IPR006009">
    <property type="entry name" value="GlcNAc_MurG"/>
</dbReference>
<dbReference type="InterPro" id="IPR007235">
    <property type="entry name" value="Glyco_trans_28_C"/>
</dbReference>
<dbReference type="InterPro" id="IPR004276">
    <property type="entry name" value="GlycoTrans_28_N"/>
</dbReference>
<dbReference type="NCBIfam" id="TIGR01133">
    <property type="entry name" value="murG"/>
    <property type="match status" value="1"/>
</dbReference>
<dbReference type="PANTHER" id="PTHR21015:SF22">
    <property type="entry name" value="GLYCOSYLTRANSFERASE"/>
    <property type="match status" value="1"/>
</dbReference>
<dbReference type="PANTHER" id="PTHR21015">
    <property type="entry name" value="UDP-N-ACETYLGLUCOSAMINE--N-ACETYLMURAMYL-(PENTAPEPTIDE) PYROPHOSPHORYL-UNDECAPRENOL N-ACETYLGLUCOSAMINE TRANSFERASE 1"/>
    <property type="match status" value="1"/>
</dbReference>
<dbReference type="Pfam" id="PF04101">
    <property type="entry name" value="Glyco_tran_28_C"/>
    <property type="match status" value="1"/>
</dbReference>
<dbReference type="Pfam" id="PF03033">
    <property type="entry name" value="Glyco_transf_28"/>
    <property type="match status" value="1"/>
</dbReference>
<dbReference type="SUPFAM" id="SSF53756">
    <property type="entry name" value="UDP-Glycosyltransferase/glycogen phosphorylase"/>
    <property type="match status" value="1"/>
</dbReference>
<name>MURG_PSEPG</name>
<protein>
    <recommendedName>
        <fullName evidence="1">UDP-N-acetylglucosamine--N-acetylmuramyl-(pentapeptide) pyrophosphoryl-undecaprenol N-acetylglucosamine transferase</fullName>
        <ecNumber evidence="1">2.4.1.227</ecNumber>
    </recommendedName>
    <alternativeName>
        <fullName evidence="1">Undecaprenyl-PP-MurNAc-pentapeptide-UDPGlcNAc GlcNAc transferase</fullName>
    </alternativeName>
</protein>
<evidence type="ECO:0000255" key="1">
    <source>
        <dbReference type="HAMAP-Rule" id="MF_00033"/>
    </source>
</evidence>
<comment type="function">
    <text evidence="1">Cell wall formation. Catalyzes the transfer of a GlcNAc subunit on undecaprenyl-pyrophosphoryl-MurNAc-pentapeptide (lipid intermediate I) to form undecaprenyl-pyrophosphoryl-MurNAc-(pentapeptide)GlcNAc (lipid intermediate II).</text>
</comment>
<comment type="catalytic activity">
    <reaction evidence="1">
        <text>di-trans,octa-cis-undecaprenyl diphospho-N-acetyl-alpha-D-muramoyl-L-alanyl-D-glutamyl-meso-2,6-diaminopimeloyl-D-alanyl-D-alanine + UDP-N-acetyl-alpha-D-glucosamine = di-trans,octa-cis-undecaprenyl diphospho-[N-acetyl-alpha-D-glucosaminyl-(1-&gt;4)]-N-acetyl-alpha-D-muramoyl-L-alanyl-D-glutamyl-meso-2,6-diaminopimeloyl-D-alanyl-D-alanine + UDP + H(+)</text>
        <dbReference type="Rhea" id="RHEA:31227"/>
        <dbReference type="ChEBI" id="CHEBI:15378"/>
        <dbReference type="ChEBI" id="CHEBI:57705"/>
        <dbReference type="ChEBI" id="CHEBI:58223"/>
        <dbReference type="ChEBI" id="CHEBI:61387"/>
        <dbReference type="ChEBI" id="CHEBI:61388"/>
        <dbReference type="EC" id="2.4.1.227"/>
    </reaction>
</comment>
<comment type="pathway">
    <text evidence="1">Cell wall biogenesis; peptidoglycan biosynthesis.</text>
</comment>
<comment type="subcellular location">
    <subcellularLocation>
        <location evidence="1">Cell inner membrane</location>
        <topology evidence="1">Peripheral membrane protein</topology>
        <orientation evidence="1">Cytoplasmic side</orientation>
    </subcellularLocation>
</comment>
<comment type="similarity">
    <text evidence="1">Belongs to the glycosyltransferase 28 family. MurG subfamily.</text>
</comment>
<organism>
    <name type="scientific">Pseudomonas putida (strain GB-1)</name>
    <dbReference type="NCBI Taxonomy" id="76869"/>
    <lineage>
        <taxon>Bacteria</taxon>
        <taxon>Pseudomonadati</taxon>
        <taxon>Pseudomonadota</taxon>
        <taxon>Gammaproteobacteria</taxon>
        <taxon>Pseudomonadales</taxon>
        <taxon>Pseudomonadaceae</taxon>
        <taxon>Pseudomonas</taxon>
    </lineage>
</organism>